<name>Y1967_RHILW</name>
<protein>
    <recommendedName>
        <fullName evidence="1">UPF0283 membrane protein Rleg2_1967</fullName>
    </recommendedName>
</protein>
<proteinExistence type="inferred from homology"/>
<accession>B5ZRH1</accession>
<reference key="1">
    <citation type="journal article" date="2010" name="Stand. Genomic Sci.">
        <title>Complete genome sequence of Rhizobium leguminosarum bv trifolii strain WSM2304, an effective microsymbiont of the South American clover Trifolium polymorphum.</title>
        <authorList>
            <person name="Reeve W."/>
            <person name="O'Hara G."/>
            <person name="Chain P."/>
            <person name="Ardley J."/>
            <person name="Brau L."/>
            <person name="Nandesena K."/>
            <person name="Tiwari R."/>
            <person name="Malfatti S."/>
            <person name="Kiss H."/>
            <person name="Lapidus A."/>
            <person name="Copeland A."/>
            <person name="Nolan M."/>
            <person name="Land M."/>
            <person name="Ivanova N."/>
            <person name="Mavromatis K."/>
            <person name="Markowitz V."/>
            <person name="Kyrpides N."/>
            <person name="Melino V."/>
            <person name="Denton M."/>
            <person name="Yates R."/>
            <person name="Howieson J."/>
        </authorList>
    </citation>
    <scope>NUCLEOTIDE SEQUENCE [LARGE SCALE GENOMIC DNA]</scope>
    <source>
        <strain>WSM2304</strain>
    </source>
</reference>
<evidence type="ECO:0000255" key="1">
    <source>
        <dbReference type="HAMAP-Rule" id="MF_01085"/>
    </source>
</evidence>
<evidence type="ECO:0000256" key="2">
    <source>
        <dbReference type="SAM" id="MobiDB-lite"/>
    </source>
</evidence>
<dbReference type="EMBL" id="CP001191">
    <property type="protein sequence ID" value="ACI55252.1"/>
    <property type="molecule type" value="Genomic_DNA"/>
</dbReference>
<dbReference type="RefSeq" id="WP_012557832.1">
    <property type="nucleotide sequence ID" value="NC_011369.1"/>
</dbReference>
<dbReference type="STRING" id="395492.Rleg2_1967"/>
<dbReference type="KEGG" id="rlt:Rleg2_1967"/>
<dbReference type="eggNOG" id="COG3768">
    <property type="taxonomic scope" value="Bacteria"/>
</dbReference>
<dbReference type="HOGENOM" id="CLU_057693_1_0_5"/>
<dbReference type="Proteomes" id="UP000008330">
    <property type="component" value="Chromosome"/>
</dbReference>
<dbReference type="GO" id="GO:0005886">
    <property type="term" value="C:plasma membrane"/>
    <property type="evidence" value="ECO:0007669"/>
    <property type="project" value="UniProtKB-SubCell"/>
</dbReference>
<dbReference type="HAMAP" id="MF_01085">
    <property type="entry name" value="UPF0283"/>
    <property type="match status" value="1"/>
</dbReference>
<dbReference type="InterPro" id="IPR021147">
    <property type="entry name" value="DUF697"/>
</dbReference>
<dbReference type="InterPro" id="IPR006507">
    <property type="entry name" value="UPF0283"/>
</dbReference>
<dbReference type="NCBIfam" id="TIGR01620">
    <property type="entry name" value="hyp_HI0043"/>
    <property type="match status" value="1"/>
</dbReference>
<dbReference type="PANTHER" id="PTHR39342">
    <property type="entry name" value="UPF0283 MEMBRANE PROTEIN YCJF"/>
    <property type="match status" value="1"/>
</dbReference>
<dbReference type="PANTHER" id="PTHR39342:SF1">
    <property type="entry name" value="UPF0283 MEMBRANE PROTEIN YCJF"/>
    <property type="match status" value="1"/>
</dbReference>
<dbReference type="Pfam" id="PF05128">
    <property type="entry name" value="DUF697"/>
    <property type="match status" value="1"/>
</dbReference>
<sequence length="359" mass="38466">MSKPPSDPPRRPPAAFTYEDEATERHDNGRQAERRRKPESFSENIVVTADEDDPFLNPDKDLSAVPVATPLRRRTSFGKIAAGAFGILLSLGIGLWTDSLIRDLFTRADWLGYLALAVLAVGVLAVLALVIRETSGMMRLAAVQAIKAEAEAAMVETRPAKARAVVARLVTLLSANPETSKGRATLKATEGEVIDPPHLIALAERELLTPLDRKARALIVNASKRVSLVTAVSPRAVVDLLYVLYEAVRLIRAMAELYGGRPGTLGMFRLLRDVLAHLAVTGSIAVGDSLVQQVLGHGLASKLSARLGEGVINGLMTARIGIAAMDLCRPLAFHALKRPGIGDFIGDLTPSMSPRGNTP</sequence>
<gene>
    <name type="ordered locus">Rleg2_1967</name>
</gene>
<keyword id="KW-0997">Cell inner membrane</keyword>
<keyword id="KW-1003">Cell membrane</keyword>
<keyword id="KW-0472">Membrane</keyword>
<keyword id="KW-1185">Reference proteome</keyword>
<keyword id="KW-0812">Transmembrane</keyword>
<keyword id="KW-1133">Transmembrane helix</keyword>
<comment type="subcellular location">
    <subcellularLocation>
        <location evidence="1">Cell inner membrane</location>
        <topology evidence="1">Multi-pass membrane protein</topology>
    </subcellularLocation>
</comment>
<comment type="similarity">
    <text evidence="1">Belongs to the UPF0283 family.</text>
</comment>
<organism>
    <name type="scientific">Rhizobium leguminosarum bv. trifolii (strain WSM2304)</name>
    <dbReference type="NCBI Taxonomy" id="395492"/>
    <lineage>
        <taxon>Bacteria</taxon>
        <taxon>Pseudomonadati</taxon>
        <taxon>Pseudomonadota</taxon>
        <taxon>Alphaproteobacteria</taxon>
        <taxon>Hyphomicrobiales</taxon>
        <taxon>Rhizobiaceae</taxon>
        <taxon>Rhizobium/Agrobacterium group</taxon>
        <taxon>Rhizobium</taxon>
    </lineage>
</organism>
<feature type="chain" id="PRO_1000149865" description="UPF0283 membrane protein Rleg2_1967">
    <location>
        <begin position="1"/>
        <end position="359"/>
    </location>
</feature>
<feature type="transmembrane region" description="Helical" evidence="1">
    <location>
        <begin position="77"/>
        <end position="97"/>
    </location>
</feature>
<feature type="transmembrane region" description="Helical" evidence="1">
    <location>
        <begin position="111"/>
        <end position="131"/>
    </location>
</feature>
<feature type="region of interest" description="Disordered" evidence="2">
    <location>
        <begin position="1"/>
        <end position="43"/>
    </location>
</feature>
<feature type="compositionally biased region" description="Basic and acidic residues" evidence="2">
    <location>
        <begin position="23"/>
        <end position="40"/>
    </location>
</feature>